<gene>
    <name evidence="1" type="primary">rpsQ</name>
    <name type="ordered locus">HH_1387</name>
</gene>
<dbReference type="EMBL" id="AE017125">
    <property type="protein sequence ID" value="AAP77984.1"/>
    <property type="molecule type" value="Genomic_DNA"/>
</dbReference>
<dbReference type="RefSeq" id="WP_011116227.1">
    <property type="nucleotide sequence ID" value="NC_004917.1"/>
</dbReference>
<dbReference type="SMR" id="Q7VGD5"/>
<dbReference type="STRING" id="235279.HH_1387"/>
<dbReference type="KEGG" id="hhe:HH_1387"/>
<dbReference type="eggNOG" id="COG0186">
    <property type="taxonomic scope" value="Bacteria"/>
</dbReference>
<dbReference type="HOGENOM" id="CLU_073626_1_1_7"/>
<dbReference type="OrthoDB" id="9811714at2"/>
<dbReference type="Proteomes" id="UP000002495">
    <property type="component" value="Chromosome"/>
</dbReference>
<dbReference type="GO" id="GO:0022627">
    <property type="term" value="C:cytosolic small ribosomal subunit"/>
    <property type="evidence" value="ECO:0007669"/>
    <property type="project" value="TreeGrafter"/>
</dbReference>
<dbReference type="GO" id="GO:0019843">
    <property type="term" value="F:rRNA binding"/>
    <property type="evidence" value="ECO:0007669"/>
    <property type="project" value="UniProtKB-UniRule"/>
</dbReference>
<dbReference type="GO" id="GO:0003735">
    <property type="term" value="F:structural constituent of ribosome"/>
    <property type="evidence" value="ECO:0007669"/>
    <property type="project" value="InterPro"/>
</dbReference>
<dbReference type="GO" id="GO:0006412">
    <property type="term" value="P:translation"/>
    <property type="evidence" value="ECO:0007669"/>
    <property type="project" value="UniProtKB-UniRule"/>
</dbReference>
<dbReference type="CDD" id="cd00364">
    <property type="entry name" value="Ribosomal_uS17"/>
    <property type="match status" value="1"/>
</dbReference>
<dbReference type="Gene3D" id="2.40.50.140">
    <property type="entry name" value="Nucleic acid-binding proteins"/>
    <property type="match status" value="1"/>
</dbReference>
<dbReference type="HAMAP" id="MF_01345_B">
    <property type="entry name" value="Ribosomal_uS17_B"/>
    <property type="match status" value="1"/>
</dbReference>
<dbReference type="InterPro" id="IPR012340">
    <property type="entry name" value="NA-bd_OB-fold"/>
</dbReference>
<dbReference type="InterPro" id="IPR000266">
    <property type="entry name" value="Ribosomal_uS17"/>
</dbReference>
<dbReference type="InterPro" id="IPR019984">
    <property type="entry name" value="Ribosomal_uS17_bact/chlr"/>
</dbReference>
<dbReference type="InterPro" id="IPR019979">
    <property type="entry name" value="Ribosomal_uS17_CS"/>
</dbReference>
<dbReference type="NCBIfam" id="NF004123">
    <property type="entry name" value="PRK05610.1"/>
    <property type="match status" value="1"/>
</dbReference>
<dbReference type="NCBIfam" id="TIGR03635">
    <property type="entry name" value="uS17_bact"/>
    <property type="match status" value="1"/>
</dbReference>
<dbReference type="PANTHER" id="PTHR10744">
    <property type="entry name" value="40S RIBOSOMAL PROTEIN S11 FAMILY MEMBER"/>
    <property type="match status" value="1"/>
</dbReference>
<dbReference type="PANTHER" id="PTHR10744:SF1">
    <property type="entry name" value="SMALL RIBOSOMAL SUBUNIT PROTEIN US17M"/>
    <property type="match status" value="1"/>
</dbReference>
<dbReference type="Pfam" id="PF00366">
    <property type="entry name" value="Ribosomal_S17"/>
    <property type="match status" value="1"/>
</dbReference>
<dbReference type="PRINTS" id="PR00973">
    <property type="entry name" value="RIBOSOMALS17"/>
</dbReference>
<dbReference type="SUPFAM" id="SSF50249">
    <property type="entry name" value="Nucleic acid-binding proteins"/>
    <property type="match status" value="1"/>
</dbReference>
<dbReference type="PROSITE" id="PS00056">
    <property type="entry name" value="RIBOSOMAL_S17"/>
    <property type="match status" value="1"/>
</dbReference>
<accession>Q7VGD5</accession>
<evidence type="ECO:0000255" key="1">
    <source>
        <dbReference type="HAMAP-Rule" id="MF_01345"/>
    </source>
</evidence>
<evidence type="ECO:0000305" key="2"/>
<proteinExistence type="inferred from homology"/>
<protein>
    <recommendedName>
        <fullName evidence="1">Small ribosomal subunit protein uS17</fullName>
    </recommendedName>
    <alternativeName>
        <fullName evidence="2">30S ribosomal protein S17</fullName>
    </alternativeName>
</protein>
<reference key="1">
    <citation type="journal article" date="2003" name="Proc. Natl. Acad. Sci. U.S.A.">
        <title>The complete genome sequence of the carcinogenic bacterium Helicobacter hepaticus.</title>
        <authorList>
            <person name="Suerbaum S."/>
            <person name="Josenhans C."/>
            <person name="Sterzenbach T."/>
            <person name="Drescher B."/>
            <person name="Brandt P."/>
            <person name="Bell M."/>
            <person name="Droege M."/>
            <person name="Fartmann B."/>
            <person name="Fischer H.-P."/>
            <person name="Ge Z."/>
            <person name="Hoerster A."/>
            <person name="Holland R."/>
            <person name="Klein K."/>
            <person name="Koenig J."/>
            <person name="Macko L."/>
            <person name="Mendz G.L."/>
            <person name="Nyakatura G."/>
            <person name="Schauer D.B."/>
            <person name="Shen Z."/>
            <person name="Weber J."/>
            <person name="Frosch M."/>
            <person name="Fox J.G."/>
        </authorList>
    </citation>
    <scope>NUCLEOTIDE SEQUENCE [LARGE SCALE GENOMIC DNA]</scope>
    <source>
        <strain>ATCC 51449 / 3B1</strain>
    </source>
</reference>
<organism>
    <name type="scientific">Helicobacter hepaticus (strain ATCC 51449 / 3B1)</name>
    <dbReference type="NCBI Taxonomy" id="235279"/>
    <lineage>
        <taxon>Bacteria</taxon>
        <taxon>Pseudomonadati</taxon>
        <taxon>Campylobacterota</taxon>
        <taxon>Epsilonproteobacteria</taxon>
        <taxon>Campylobacterales</taxon>
        <taxon>Helicobacteraceae</taxon>
        <taxon>Helicobacter</taxon>
    </lineage>
</organism>
<comment type="function">
    <text evidence="1">One of the primary rRNA binding proteins, it binds specifically to the 5'-end of 16S ribosomal RNA.</text>
</comment>
<comment type="subunit">
    <text evidence="1">Part of the 30S ribosomal subunit.</text>
</comment>
<comment type="similarity">
    <text evidence="1">Belongs to the universal ribosomal protein uS17 family.</text>
</comment>
<keyword id="KW-1185">Reference proteome</keyword>
<keyword id="KW-0687">Ribonucleoprotein</keyword>
<keyword id="KW-0689">Ribosomal protein</keyword>
<keyword id="KW-0694">RNA-binding</keyword>
<keyword id="KW-0699">rRNA-binding</keyword>
<name>RS17_HELHP</name>
<feature type="chain" id="PRO_0000233488" description="Small ribosomal subunit protein uS17">
    <location>
        <begin position="1"/>
        <end position="88"/>
    </location>
</feature>
<sequence>MSEKQAHTRVIQGKVISQAGNKSIVILVERKVVHSKYRKIVKRFKKYTIHDENQSAKIGDVVSAIECKPISKTKAFRFKEIITAGVEL</sequence>